<feature type="chain" id="PRO_0000277276" description="Uncharacterized protein ycf37">
    <location>
        <begin position="1"/>
        <end position="178"/>
    </location>
</feature>
<feature type="repeat" description="TPR 1">
    <location>
        <begin position="52"/>
        <end position="89"/>
    </location>
</feature>
<feature type="repeat" description="TPR 2">
    <location>
        <begin position="95"/>
        <end position="128"/>
    </location>
</feature>
<feature type="repeat" description="TPR 3">
    <location>
        <begin position="129"/>
        <end position="162"/>
    </location>
</feature>
<sequence length="178" mass="20738">MILALPIFYLSILTIFLLILNWLIFQQLKTILLLESQFKYFVDKSQNRKLEPDESFAFAKVCVAKKYFSKAIIEGQLALKNYRDLNILDNNIVIANLYNMLGFIYFEAGQTSFAKNFYEQALQINPNYVVALNNLAKIYEEVKDLKKAESLYDKVLTLNLNNKTANRRKDFIAKTKNI</sequence>
<proteinExistence type="inferred from homology"/>
<reference key="1">
    <citation type="submission" date="2003-11" db="EMBL/GenBank/DDBJ databases">
        <title>Whole genome sequence of Porphyra yezoensis chloroplast.</title>
        <authorList>
            <person name="Kunimoto M."/>
            <person name="Morishima K."/>
            <person name="Yoshikawa M."/>
            <person name="Fukuda S."/>
            <person name="Kobayashi T."/>
            <person name="Kobayashi M."/>
            <person name="Okazaki T."/>
            <person name="Ohara I."/>
            <person name="Nakayama I."/>
        </authorList>
    </citation>
    <scope>NUCLEOTIDE SEQUENCE [LARGE SCALE GENOMIC DNA]</scope>
    <source>
        <strain>U-51</strain>
    </source>
</reference>
<comment type="subcellular location">
    <subcellularLocation>
        <location>Plastid</location>
        <location>Chloroplast</location>
    </subcellularLocation>
</comment>
<comment type="similarity">
    <text evidence="1">Belongs to the ycf37 family.</text>
</comment>
<name>YCF37_PYRYE</name>
<gene>
    <name type="primary">ycf37</name>
</gene>
<geneLocation type="chloroplast"/>
<accession>Q1XDU6</accession>
<organism>
    <name type="scientific">Pyropia yezoensis</name>
    <name type="common">Susabi-nori</name>
    <name type="synonym">Porphyra yezoensis</name>
    <dbReference type="NCBI Taxonomy" id="2788"/>
    <lineage>
        <taxon>Eukaryota</taxon>
        <taxon>Rhodophyta</taxon>
        <taxon>Bangiophyceae</taxon>
        <taxon>Bangiales</taxon>
        <taxon>Bangiaceae</taxon>
        <taxon>Pyropia</taxon>
    </lineage>
</organism>
<keyword id="KW-0150">Chloroplast</keyword>
<keyword id="KW-0934">Plastid</keyword>
<keyword id="KW-0677">Repeat</keyword>
<keyword id="KW-0802">TPR repeat</keyword>
<evidence type="ECO:0000305" key="1"/>
<dbReference type="EMBL" id="AP006715">
    <property type="protein sequence ID" value="BAE92315.1"/>
    <property type="molecule type" value="Genomic_DNA"/>
</dbReference>
<dbReference type="RefSeq" id="YP_536872.1">
    <property type="nucleotide sequence ID" value="NC_007932.1"/>
</dbReference>
<dbReference type="SMR" id="Q1XDU6"/>
<dbReference type="GeneID" id="3978992"/>
<dbReference type="GO" id="GO:0009507">
    <property type="term" value="C:chloroplast"/>
    <property type="evidence" value="ECO:0007669"/>
    <property type="project" value="UniProtKB-SubCell"/>
</dbReference>
<dbReference type="Gene3D" id="1.25.40.10">
    <property type="entry name" value="Tetratricopeptide repeat domain"/>
    <property type="match status" value="1"/>
</dbReference>
<dbReference type="InterPro" id="IPR011990">
    <property type="entry name" value="TPR-like_helical_dom_sf"/>
</dbReference>
<dbReference type="InterPro" id="IPR019734">
    <property type="entry name" value="TPR_rpt"/>
</dbReference>
<dbReference type="Pfam" id="PF14559">
    <property type="entry name" value="TPR_19"/>
    <property type="match status" value="1"/>
</dbReference>
<dbReference type="SMART" id="SM00028">
    <property type="entry name" value="TPR"/>
    <property type="match status" value="2"/>
</dbReference>
<dbReference type="SUPFAM" id="SSF48452">
    <property type="entry name" value="TPR-like"/>
    <property type="match status" value="1"/>
</dbReference>
<dbReference type="PROSITE" id="PS50005">
    <property type="entry name" value="TPR"/>
    <property type="match status" value="2"/>
</dbReference>
<dbReference type="PROSITE" id="PS50293">
    <property type="entry name" value="TPR_REGION"/>
    <property type="match status" value="1"/>
</dbReference>
<protein>
    <recommendedName>
        <fullName>Uncharacterized protein ycf37</fullName>
    </recommendedName>
</protein>